<sequence>MIDEPASRTALVLFSGGQDSATCLAWALQRFARVETLGFDYGQRHAIELDCRDSLLAGMASLRPDWAKKLGETHTLAIPTLAEISDTALTRNVAIEVSESGLPNTFVPGRNLVFLTFAAALAYRRGVTDIVGGMCETDYSGYPDCRDETIRALRIALNLGMVRQFELHTPLMRLDKGATWSLAHELGGTGLVDLIREHSHTCYLGERGARHAWGYGCGECPACGLRAKGWREYLARIA</sequence>
<comment type="function">
    <text evidence="1">Catalyzes the ATP-dependent conversion of 7-carboxy-7-deazaguanine (CDG) to 7-cyano-7-deazaguanine (preQ(0)).</text>
</comment>
<comment type="catalytic activity">
    <reaction evidence="1">
        <text>7-carboxy-7-deazaguanine + NH4(+) + ATP = 7-cyano-7-deazaguanine + ADP + phosphate + H2O + H(+)</text>
        <dbReference type="Rhea" id="RHEA:27982"/>
        <dbReference type="ChEBI" id="CHEBI:15377"/>
        <dbReference type="ChEBI" id="CHEBI:15378"/>
        <dbReference type="ChEBI" id="CHEBI:28938"/>
        <dbReference type="ChEBI" id="CHEBI:30616"/>
        <dbReference type="ChEBI" id="CHEBI:43474"/>
        <dbReference type="ChEBI" id="CHEBI:45075"/>
        <dbReference type="ChEBI" id="CHEBI:61036"/>
        <dbReference type="ChEBI" id="CHEBI:456216"/>
        <dbReference type="EC" id="6.3.4.20"/>
    </reaction>
</comment>
<comment type="cofactor">
    <cofactor evidence="1">
        <name>Zn(2+)</name>
        <dbReference type="ChEBI" id="CHEBI:29105"/>
    </cofactor>
    <text evidence="1">Binds 1 zinc ion per subunit.</text>
</comment>
<comment type="pathway">
    <text evidence="1">Purine metabolism; 7-cyano-7-deazaguanine biosynthesis.</text>
</comment>
<comment type="similarity">
    <text evidence="1">Belongs to the QueC family.</text>
</comment>
<keyword id="KW-0067">ATP-binding</keyword>
<keyword id="KW-0436">Ligase</keyword>
<keyword id="KW-0479">Metal-binding</keyword>
<keyword id="KW-0547">Nucleotide-binding</keyword>
<keyword id="KW-0671">Queuosine biosynthesis</keyword>
<keyword id="KW-1185">Reference proteome</keyword>
<keyword id="KW-0862">Zinc</keyword>
<name>QUEC_NITWN</name>
<dbReference type="EC" id="6.3.4.20" evidence="1"/>
<dbReference type="EMBL" id="CP000115">
    <property type="protein sequence ID" value="ABA04714.1"/>
    <property type="molecule type" value="Genomic_DNA"/>
</dbReference>
<dbReference type="RefSeq" id="WP_011314721.1">
    <property type="nucleotide sequence ID" value="NC_007406.1"/>
</dbReference>
<dbReference type="SMR" id="Q3SSM7"/>
<dbReference type="STRING" id="323098.Nwi_1453"/>
<dbReference type="KEGG" id="nwi:Nwi_1453"/>
<dbReference type="eggNOG" id="COG0603">
    <property type="taxonomic scope" value="Bacteria"/>
</dbReference>
<dbReference type="HOGENOM" id="CLU_081854_0_0_5"/>
<dbReference type="OrthoDB" id="9789567at2"/>
<dbReference type="UniPathway" id="UPA00391"/>
<dbReference type="Proteomes" id="UP000002531">
    <property type="component" value="Chromosome"/>
</dbReference>
<dbReference type="GO" id="GO:0005524">
    <property type="term" value="F:ATP binding"/>
    <property type="evidence" value="ECO:0007669"/>
    <property type="project" value="UniProtKB-UniRule"/>
</dbReference>
<dbReference type="GO" id="GO:0016879">
    <property type="term" value="F:ligase activity, forming carbon-nitrogen bonds"/>
    <property type="evidence" value="ECO:0007669"/>
    <property type="project" value="UniProtKB-UniRule"/>
</dbReference>
<dbReference type="GO" id="GO:0008270">
    <property type="term" value="F:zinc ion binding"/>
    <property type="evidence" value="ECO:0007669"/>
    <property type="project" value="UniProtKB-UniRule"/>
</dbReference>
<dbReference type="GO" id="GO:0008616">
    <property type="term" value="P:queuosine biosynthetic process"/>
    <property type="evidence" value="ECO:0007669"/>
    <property type="project" value="UniProtKB-UniRule"/>
</dbReference>
<dbReference type="CDD" id="cd01995">
    <property type="entry name" value="QueC-like"/>
    <property type="match status" value="1"/>
</dbReference>
<dbReference type="Gene3D" id="3.40.50.620">
    <property type="entry name" value="HUPs"/>
    <property type="match status" value="1"/>
</dbReference>
<dbReference type="HAMAP" id="MF_01633">
    <property type="entry name" value="QueC"/>
    <property type="match status" value="1"/>
</dbReference>
<dbReference type="InterPro" id="IPR018317">
    <property type="entry name" value="QueC"/>
</dbReference>
<dbReference type="InterPro" id="IPR014729">
    <property type="entry name" value="Rossmann-like_a/b/a_fold"/>
</dbReference>
<dbReference type="NCBIfam" id="TIGR00364">
    <property type="entry name" value="7-cyano-7-deazaguanine synthase QueC"/>
    <property type="match status" value="1"/>
</dbReference>
<dbReference type="PANTHER" id="PTHR42914">
    <property type="entry name" value="7-CYANO-7-DEAZAGUANINE SYNTHASE"/>
    <property type="match status" value="1"/>
</dbReference>
<dbReference type="PANTHER" id="PTHR42914:SF1">
    <property type="entry name" value="7-CYANO-7-DEAZAGUANINE SYNTHASE"/>
    <property type="match status" value="1"/>
</dbReference>
<dbReference type="Pfam" id="PF06508">
    <property type="entry name" value="QueC"/>
    <property type="match status" value="1"/>
</dbReference>
<dbReference type="PIRSF" id="PIRSF006293">
    <property type="entry name" value="ExsB"/>
    <property type="match status" value="1"/>
</dbReference>
<dbReference type="SUPFAM" id="SSF52402">
    <property type="entry name" value="Adenine nucleotide alpha hydrolases-like"/>
    <property type="match status" value="1"/>
</dbReference>
<feature type="chain" id="PRO_0000246866" description="7-cyano-7-deazaguanine synthase">
    <location>
        <begin position="1"/>
        <end position="238"/>
    </location>
</feature>
<feature type="binding site" evidence="1">
    <location>
        <begin position="14"/>
        <end position="24"/>
    </location>
    <ligand>
        <name>ATP</name>
        <dbReference type="ChEBI" id="CHEBI:30616"/>
    </ligand>
</feature>
<feature type="binding site" evidence="1">
    <location>
        <position position="202"/>
    </location>
    <ligand>
        <name>Zn(2+)</name>
        <dbReference type="ChEBI" id="CHEBI:29105"/>
    </ligand>
</feature>
<feature type="binding site" evidence="1">
    <location>
        <position position="217"/>
    </location>
    <ligand>
        <name>Zn(2+)</name>
        <dbReference type="ChEBI" id="CHEBI:29105"/>
    </ligand>
</feature>
<feature type="binding site" evidence="1">
    <location>
        <position position="220"/>
    </location>
    <ligand>
        <name>Zn(2+)</name>
        <dbReference type="ChEBI" id="CHEBI:29105"/>
    </ligand>
</feature>
<feature type="binding site" evidence="1">
    <location>
        <position position="223"/>
    </location>
    <ligand>
        <name>Zn(2+)</name>
        <dbReference type="ChEBI" id="CHEBI:29105"/>
    </ligand>
</feature>
<proteinExistence type="inferred from homology"/>
<evidence type="ECO:0000255" key="1">
    <source>
        <dbReference type="HAMAP-Rule" id="MF_01633"/>
    </source>
</evidence>
<organism>
    <name type="scientific">Nitrobacter winogradskyi (strain ATCC 25391 / DSM 10237 / CIP 104748 / NCIMB 11846 / Nb-255)</name>
    <dbReference type="NCBI Taxonomy" id="323098"/>
    <lineage>
        <taxon>Bacteria</taxon>
        <taxon>Pseudomonadati</taxon>
        <taxon>Pseudomonadota</taxon>
        <taxon>Alphaproteobacteria</taxon>
        <taxon>Hyphomicrobiales</taxon>
        <taxon>Nitrobacteraceae</taxon>
        <taxon>Nitrobacter</taxon>
    </lineage>
</organism>
<reference key="1">
    <citation type="journal article" date="2006" name="Appl. Environ. Microbiol.">
        <title>Genome sequence of the chemolithoautotrophic nitrite-oxidizing bacterium Nitrobacter winogradskyi Nb-255.</title>
        <authorList>
            <person name="Starkenburg S.R."/>
            <person name="Chain P.S.G."/>
            <person name="Sayavedra-Soto L.A."/>
            <person name="Hauser L."/>
            <person name="Land M.L."/>
            <person name="Larimer F.W."/>
            <person name="Malfatti S.A."/>
            <person name="Klotz M.G."/>
            <person name="Bottomley P.J."/>
            <person name="Arp D.J."/>
            <person name="Hickey W.J."/>
        </authorList>
    </citation>
    <scope>NUCLEOTIDE SEQUENCE [LARGE SCALE GENOMIC DNA]</scope>
    <source>
        <strain>ATCC 25391 / DSM 10237 / CIP 104748 / NCIMB 11846 / Nb-255</strain>
    </source>
</reference>
<gene>
    <name evidence="1" type="primary">queC</name>
    <name type="ordered locus">Nwi_1453</name>
</gene>
<protein>
    <recommendedName>
        <fullName evidence="1">7-cyano-7-deazaguanine synthase</fullName>
        <ecNumber evidence="1">6.3.4.20</ecNumber>
    </recommendedName>
    <alternativeName>
        <fullName evidence="1">7-cyano-7-carbaguanine synthase</fullName>
    </alternativeName>
    <alternativeName>
        <fullName evidence="1">PreQ(0) synthase</fullName>
    </alternativeName>
    <alternativeName>
        <fullName evidence="1">Queuosine biosynthesis protein QueC</fullName>
    </alternativeName>
</protein>
<accession>Q3SSM7</accession>